<dbReference type="EC" id="2.1.1.-" evidence="1"/>
<dbReference type="EMBL" id="LT708304">
    <property type="protein sequence ID" value="SIU02581.1"/>
    <property type="molecule type" value="Genomic_DNA"/>
</dbReference>
<dbReference type="RefSeq" id="NP_857585.1">
    <property type="nucleotide sequence ID" value="NC_002945.3"/>
</dbReference>
<dbReference type="RefSeq" id="WP_003899763.1">
    <property type="nucleotide sequence ID" value="NC_002945.4"/>
</dbReference>
<dbReference type="SMR" id="P59964"/>
<dbReference type="GeneID" id="45427919"/>
<dbReference type="KEGG" id="mbo:BQ2027_MB3950C"/>
<dbReference type="PATRIC" id="fig|233413.5.peg.4328"/>
<dbReference type="Proteomes" id="UP000001419">
    <property type="component" value="Chromosome"/>
</dbReference>
<dbReference type="GO" id="GO:0005829">
    <property type="term" value="C:cytosol"/>
    <property type="evidence" value="ECO:0007669"/>
    <property type="project" value="TreeGrafter"/>
</dbReference>
<dbReference type="GO" id="GO:0070043">
    <property type="term" value="F:rRNA (guanine-N7-)-methyltransferase activity"/>
    <property type="evidence" value="ECO:0007669"/>
    <property type="project" value="UniProtKB-UniRule"/>
</dbReference>
<dbReference type="FunFam" id="3.40.50.150:FF:000117">
    <property type="entry name" value="Ribosomal RNA small subunit methyltransferase G"/>
    <property type="match status" value="1"/>
</dbReference>
<dbReference type="Gene3D" id="3.40.50.150">
    <property type="entry name" value="Vaccinia Virus protein VP39"/>
    <property type="match status" value="1"/>
</dbReference>
<dbReference type="HAMAP" id="MF_00074">
    <property type="entry name" value="16SrRNA_methyltr_G"/>
    <property type="match status" value="1"/>
</dbReference>
<dbReference type="InterPro" id="IPR003682">
    <property type="entry name" value="rRNA_ssu_MeTfrase_G"/>
</dbReference>
<dbReference type="InterPro" id="IPR029063">
    <property type="entry name" value="SAM-dependent_MTases_sf"/>
</dbReference>
<dbReference type="NCBIfam" id="TIGR00138">
    <property type="entry name" value="rsmG_gidB"/>
    <property type="match status" value="1"/>
</dbReference>
<dbReference type="PANTHER" id="PTHR31760">
    <property type="entry name" value="S-ADENOSYL-L-METHIONINE-DEPENDENT METHYLTRANSFERASES SUPERFAMILY PROTEIN"/>
    <property type="match status" value="1"/>
</dbReference>
<dbReference type="PANTHER" id="PTHR31760:SF0">
    <property type="entry name" value="S-ADENOSYL-L-METHIONINE-DEPENDENT METHYLTRANSFERASES SUPERFAMILY PROTEIN"/>
    <property type="match status" value="1"/>
</dbReference>
<dbReference type="Pfam" id="PF02527">
    <property type="entry name" value="GidB"/>
    <property type="match status" value="1"/>
</dbReference>
<dbReference type="PIRSF" id="PIRSF003078">
    <property type="entry name" value="GidB"/>
    <property type="match status" value="1"/>
</dbReference>
<dbReference type="SUPFAM" id="SSF53335">
    <property type="entry name" value="S-adenosyl-L-methionine-dependent methyltransferases"/>
    <property type="match status" value="1"/>
</dbReference>
<protein>
    <recommendedName>
        <fullName evidence="1">Ribosomal RNA small subunit methyltransferase G</fullName>
        <ecNumber evidence="1">2.1.1.-</ecNumber>
    </recommendedName>
    <alternativeName>
        <fullName evidence="1">16S rRNA 7-methylguanosine methyltransferase</fullName>
        <shortName evidence="1">16S rRNA m7G methyltransferase</shortName>
    </alternativeName>
</protein>
<accession>P59964</accession>
<accession>A0A1R3Y5P6</accession>
<accession>X2BPQ3</accession>
<organism>
    <name type="scientific">Mycobacterium bovis (strain ATCC BAA-935 / AF2122/97)</name>
    <dbReference type="NCBI Taxonomy" id="233413"/>
    <lineage>
        <taxon>Bacteria</taxon>
        <taxon>Bacillati</taxon>
        <taxon>Actinomycetota</taxon>
        <taxon>Actinomycetes</taxon>
        <taxon>Mycobacteriales</taxon>
        <taxon>Mycobacteriaceae</taxon>
        <taxon>Mycobacterium</taxon>
        <taxon>Mycobacterium tuberculosis complex</taxon>
    </lineage>
</organism>
<feature type="chain" id="PRO_0000184280" description="Ribosomal RNA small subunit methyltransferase G">
    <location>
        <begin position="1"/>
        <end position="224"/>
    </location>
</feature>
<feature type="binding site" evidence="1">
    <location>
        <position position="69"/>
    </location>
    <ligand>
        <name>S-adenosyl-L-methionine</name>
        <dbReference type="ChEBI" id="CHEBI:59789"/>
    </ligand>
</feature>
<feature type="binding site" evidence="1">
    <location>
        <position position="74"/>
    </location>
    <ligand>
        <name>S-adenosyl-L-methionine</name>
        <dbReference type="ChEBI" id="CHEBI:59789"/>
    </ligand>
</feature>
<feature type="binding site" evidence="1">
    <location>
        <begin position="119"/>
        <end position="120"/>
    </location>
    <ligand>
        <name>S-adenosyl-L-methionine</name>
        <dbReference type="ChEBI" id="CHEBI:59789"/>
    </ligand>
</feature>
<feature type="binding site" evidence="1">
    <location>
        <position position="137"/>
    </location>
    <ligand>
        <name>S-adenosyl-L-methionine</name>
        <dbReference type="ChEBI" id="CHEBI:59789"/>
    </ligand>
</feature>
<evidence type="ECO:0000255" key="1">
    <source>
        <dbReference type="HAMAP-Rule" id="MF_00074"/>
    </source>
</evidence>
<name>RSMG_MYCBO</name>
<keyword id="KW-0963">Cytoplasm</keyword>
<keyword id="KW-0489">Methyltransferase</keyword>
<keyword id="KW-1185">Reference proteome</keyword>
<keyword id="KW-0698">rRNA processing</keyword>
<keyword id="KW-0949">S-adenosyl-L-methionine</keyword>
<keyword id="KW-0808">Transferase</keyword>
<comment type="function">
    <text evidence="1">Specifically methylates the N7 position of guanine in position 518 of 16S rRNA.</text>
</comment>
<comment type="subcellular location">
    <subcellularLocation>
        <location evidence="1">Cytoplasm</location>
    </subcellularLocation>
</comment>
<comment type="similarity">
    <text evidence="1">Belongs to the methyltransferase superfamily. RNA methyltransferase RsmG family.</text>
</comment>
<sequence length="224" mass="24032">MSPIEPAASAIFGPRLGLARRYAEALAGPGVERGLVGPREVGRLWDRHLLNCAVIGELLERGDRVVDIGSGAGLPGVPLAIARPDLQVVLLEPLLRRTEFLREMVTDLGVAVEIVRGRAEESWVQDQLGGSDAAVSRAVAALDKLTKWSMPLIRPNGRMLAIKGERAHDEVREHRRVMIASGAVDVRVVTCGANYLRPPATVVFARRGKQIARGSARMASGGTA</sequence>
<proteinExistence type="inferred from homology"/>
<gene>
    <name evidence="1" type="primary">rsmG</name>
    <name type="ordered locus">BQ2027_MB3950C</name>
</gene>
<reference key="1">
    <citation type="journal article" date="2003" name="Proc. Natl. Acad. Sci. U.S.A.">
        <title>The complete genome sequence of Mycobacterium bovis.</title>
        <authorList>
            <person name="Garnier T."/>
            <person name="Eiglmeier K."/>
            <person name="Camus J.-C."/>
            <person name="Medina N."/>
            <person name="Mansoor H."/>
            <person name="Pryor M."/>
            <person name="Duthoy S."/>
            <person name="Grondin S."/>
            <person name="Lacroix C."/>
            <person name="Monsempe C."/>
            <person name="Simon S."/>
            <person name="Harris B."/>
            <person name="Atkin R."/>
            <person name="Doggett J."/>
            <person name="Mayes R."/>
            <person name="Keating L."/>
            <person name="Wheeler P.R."/>
            <person name="Parkhill J."/>
            <person name="Barrell B.G."/>
            <person name="Cole S.T."/>
            <person name="Gordon S.V."/>
            <person name="Hewinson R.G."/>
        </authorList>
    </citation>
    <scope>NUCLEOTIDE SEQUENCE [LARGE SCALE GENOMIC DNA]</scope>
    <source>
        <strain>ATCC BAA-935 / AF2122/97</strain>
    </source>
</reference>
<reference key="2">
    <citation type="journal article" date="2017" name="Genome Announc.">
        <title>Updated reference genome sequence and annotation of Mycobacterium bovis AF2122/97.</title>
        <authorList>
            <person name="Malone K.M."/>
            <person name="Farrell D."/>
            <person name="Stuber T.P."/>
            <person name="Schubert O.T."/>
            <person name="Aebersold R."/>
            <person name="Robbe-Austerman S."/>
            <person name="Gordon S.V."/>
        </authorList>
    </citation>
    <scope>NUCLEOTIDE SEQUENCE [LARGE SCALE GENOMIC DNA]</scope>
    <scope>GENOME REANNOTATION</scope>
    <source>
        <strain>ATCC BAA-935 / AF2122/97</strain>
    </source>
</reference>